<evidence type="ECO:0000255" key="1">
    <source>
        <dbReference type="HAMAP-Rule" id="MF_00484"/>
    </source>
</evidence>
<evidence type="ECO:0000256" key="2">
    <source>
        <dbReference type="SAM" id="MobiDB-lite"/>
    </source>
</evidence>
<name>GLGA_PARC0</name>
<keyword id="KW-0320">Glycogen biosynthesis</keyword>
<keyword id="KW-0328">Glycosyltransferase</keyword>
<keyword id="KW-0808">Transferase</keyword>
<feature type="chain" id="PRO_1000014336" description="Glycogen synthase">
    <location>
        <begin position="1"/>
        <end position="508"/>
    </location>
</feature>
<feature type="region of interest" description="Disordered" evidence="2">
    <location>
        <begin position="483"/>
        <end position="508"/>
    </location>
</feature>
<feature type="binding site" evidence="1">
    <location>
        <position position="15"/>
    </location>
    <ligand>
        <name>ADP-alpha-D-glucose</name>
        <dbReference type="ChEBI" id="CHEBI:57498"/>
    </ligand>
</feature>
<sequence>MKILFATSECAPLVKTGGLGDVSAALPPAIAALGHEVMLLMPAYADMPLQGNITGWHSLPAEGPWPAAQLLRVDRGGHEVPLLLLSCPQLYARGGSPYASAQGDHPDNALRFGLLAHVAARIGTPQSPCGWTADIVHANDWPTALAPLYLRQFRDAAGPRGDAVARSMVTVHNLAFQGVFPMDWAQRLGIEDRHLGIEGAEFWGQLSMLKAGLQYADAITTVSPTYAREIQTPELGFGLDGVLRARAGRLQGILNGIDTALWNPSQDTLIPAPFSADRLEGKAACKAALRRTLGLAQDGDRMLFGLVGRMTEQKGIDWVIGGAERLLRQGGQLAILGSGDPALESALRALAKRHPRHMHVTVGFDESLAHGIEAGSDSFLMPSRFEPCGLNQMYSQAYGTPPVVTPTGGLADSVTDADDPAGNGTGFVLRGSSQAAFDQAVGRALHLWKTAPDAWRRLQRNGMQRDFGWTASARAYVQAYGAARNRAETRPQTASALSYREPRPAAEY</sequence>
<dbReference type="EC" id="2.4.1.21" evidence="1"/>
<dbReference type="EMBL" id="CP000512">
    <property type="protein sequence ID" value="ABM33553.1"/>
    <property type="molecule type" value="Genomic_DNA"/>
</dbReference>
<dbReference type="RefSeq" id="WP_011796063.1">
    <property type="nucleotide sequence ID" value="NC_008752.1"/>
</dbReference>
<dbReference type="SMR" id="A1TRG5"/>
<dbReference type="STRING" id="397945.Aave_2986"/>
<dbReference type="CAZy" id="GT5">
    <property type="family name" value="Glycosyltransferase Family 5"/>
</dbReference>
<dbReference type="GeneID" id="79792667"/>
<dbReference type="KEGG" id="aav:Aave_2986"/>
<dbReference type="eggNOG" id="COG0297">
    <property type="taxonomic scope" value="Bacteria"/>
</dbReference>
<dbReference type="HOGENOM" id="CLU_009583_18_4_4"/>
<dbReference type="OrthoDB" id="9808590at2"/>
<dbReference type="UniPathway" id="UPA00164"/>
<dbReference type="Proteomes" id="UP000002596">
    <property type="component" value="Chromosome"/>
</dbReference>
<dbReference type="GO" id="GO:0009011">
    <property type="term" value="F:alpha-1,4-glucan glucosyltransferase (ADP-glucose donor) activity"/>
    <property type="evidence" value="ECO:0007669"/>
    <property type="project" value="UniProtKB-UniRule"/>
</dbReference>
<dbReference type="GO" id="GO:0004373">
    <property type="term" value="F:alpha-1,4-glucan glucosyltransferase (UDP-glucose donor) activity"/>
    <property type="evidence" value="ECO:0007669"/>
    <property type="project" value="InterPro"/>
</dbReference>
<dbReference type="GO" id="GO:0005978">
    <property type="term" value="P:glycogen biosynthetic process"/>
    <property type="evidence" value="ECO:0007669"/>
    <property type="project" value="UniProtKB-UniRule"/>
</dbReference>
<dbReference type="CDD" id="cd03791">
    <property type="entry name" value="GT5_Glycogen_synthase_DULL1-like"/>
    <property type="match status" value="1"/>
</dbReference>
<dbReference type="Gene3D" id="3.40.50.2000">
    <property type="entry name" value="Glycogen Phosphorylase B"/>
    <property type="match status" value="2"/>
</dbReference>
<dbReference type="HAMAP" id="MF_00484">
    <property type="entry name" value="Glycogen_synth"/>
    <property type="match status" value="1"/>
</dbReference>
<dbReference type="InterPro" id="IPR011835">
    <property type="entry name" value="GS/SS"/>
</dbReference>
<dbReference type="InterPro" id="IPR013534">
    <property type="entry name" value="Starch_synth_cat_dom"/>
</dbReference>
<dbReference type="NCBIfam" id="TIGR02095">
    <property type="entry name" value="glgA"/>
    <property type="match status" value="1"/>
</dbReference>
<dbReference type="NCBIfam" id="NF001899">
    <property type="entry name" value="PRK00654.1-2"/>
    <property type="match status" value="1"/>
</dbReference>
<dbReference type="PANTHER" id="PTHR45825:SF8">
    <property type="entry name" value="GLYCOGEN SYNTHASE"/>
    <property type="match status" value="1"/>
</dbReference>
<dbReference type="PANTHER" id="PTHR45825">
    <property type="entry name" value="GRANULE-BOUND STARCH SYNTHASE 1, CHLOROPLASTIC/AMYLOPLASTIC"/>
    <property type="match status" value="1"/>
</dbReference>
<dbReference type="Pfam" id="PF13692">
    <property type="entry name" value="Glyco_trans_1_4"/>
    <property type="match status" value="1"/>
</dbReference>
<dbReference type="Pfam" id="PF08323">
    <property type="entry name" value="Glyco_transf_5"/>
    <property type="match status" value="1"/>
</dbReference>
<dbReference type="SUPFAM" id="SSF53756">
    <property type="entry name" value="UDP-Glycosyltransferase/glycogen phosphorylase"/>
    <property type="match status" value="1"/>
</dbReference>
<proteinExistence type="inferred from homology"/>
<organism>
    <name type="scientific">Paracidovorax citrulli (strain AAC00-1)</name>
    <name type="common">Acidovorax citrulli</name>
    <dbReference type="NCBI Taxonomy" id="397945"/>
    <lineage>
        <taxon>Bacteria</taxon>
        <taxon>Pseudomonadati</taxon>
        <taxon>Pseudomonadota</taxon>
        <taxon>Betaproteobacteria</taxon>
        <taxon>Burkholderiales</taxon>
        <taxon>Comamonadaceae</taxon>
        <taxon>Paracidovorax</taxon>
    </lineage>
</organism>
<protein>
    <recommendedName>
        <fullName evidence="1">Glycogen synthase</fullName>
        <ecNumber evidence="1">2.4.1.21</ecNumber>
    </recommendedName>
    <alternativeName>
        <fullName evidence="1">Starch [bacterial glycogen] synthase</fullName>
    </alternativeName>
</protein>
<reference key="1">
    <citation type="submission" date="2006-12" db="EMBL/GenBank/DDBJ databases">
        <title>Complete sequence of Acidovorax avenae subsp. citrulli AAC00-1.</title>
        <authorList>
            <person name="Copeland A."/>
            <person name="Lucas S."/>
            <person name="Lapidus A."/>
            <person name="Barry K."/>
            <person name="Detter J.C."/>
            <person name="Glavina del Rio T."/>
            <person name="Dalin E."/>
            <person name="Tice H."/>
            <person name="Pitluck S."/>
            <person name="Kiss H."/>
            <person name="Brettin T."/>
            <person name="Bruce D."/>
            <person name="Han C."/>
            <person name="Tapia R."/>
            <person name="Gilna P."/>
            <person name="Schmutz J."/>
            <person name="Larimer F."/>
            <person name="Land M."/>
            <person name="Hauser L."/>
            <person name="Kyrpides N."/>
            <person name="Kim E."/>
            <person name="Stahl D."/>
            <person name="Richardson P."/>
        </authorList>
    </citation>
    <scope>NUCLEOTIDE SEQUENCE [LARGE SCALE GENOMIC DNA]</scope>
    <source>
        <strain>AAC00-1</strain>
    </source>
</reference>
<accession>A1TRG5</accession>
<comment type="function">
    <text evidence="1">Synthesizes alpha-1,4-glucan chains using ADP-glucose.</text>
</comment>
<comment type="catalytic activity">
    <reaction evidence="1">
        <text>[(1-&gt;4)-alpha-D-glucosyl](n) + ADP-alpha-D-glucose = [(1-&gt;4)-alpha-D-glucosyl](n+1) + ADP + H(+)</text>
        <dbReference type="Rhea" id="RHEA:18189"/>
        <dbReference type="Rhea" id="RHEA-COMP:9584"/>
        <dbReference type="Rhea" id="RHEA-COMP:9587"/>
        <dbReference type="ChEBI" id="CHEBI:15378"/>
        <dbReference type="ChEBI" id="CHEBI:15444"/>
        <dbReference type="ChEBI" id="CHEBI:57498"/>
        <dbReference type="ChEBI" id="CHEBI:456216"/>
        <dbReference type="EC" id="2.4.1.21"/>
    </reaction>
</comment>
<comment type="pathway">
    <text evidence="1">Glycan biosynthesis; glycogen biosynthesis.</text>
</comment>
<comment type="similarity">
    <text evidence="1">Belongs to the glycosyltransferase 1 family. Bacterial/plant glycogen synthase subfamily.</text>
</comment>
<gene>
    <name evidence="1" type="primary">glgA</name>
    <name type="ordered locus">Aave_2986</name>
</gene>